<reference key="1">
    <citation type="submission" date="2007-02" db="EMBL/GenBank/DDBJ databases">
        <title>Complete sequence of chromosome of Shewanella baltica OS155.</title>
        <authorList>
            <consortium name="US DOE Joint Genome Institute"/>
            <person name="Copeland A."/>
            <person name="Lucas S."/>
            <person name="Lapidus A."/>
            <person name="Barry K."/>
            <person name="Detter J.C."/>
            <person name="Glavina del Rio T."/>
            <person name="Hammon N."/>
            <person name="Israni S."/>
            <person name="Dalin E."/>
            <person name="Tice H."/>
            <person name="Pitluck S."/>
            <person name="Sims D.R."/>
            <person name="Brettin T."/>
            <person name="Bruce D."/>
            <person name="Han C."/>
            <person name="Tapia R."/>
            <person name="Brainard J."/>
            <person name="Schmutz J."/>
            <person name="Larimer F."/>
            <person name="Land M."/>
            <person name="Hauser L."/>
            <person name="Kyrpides N."/>
            <person name="Mikhailova N."/>
            <person name="Brettar I."/>
            <person name="Klappenbach J."/>
            <person name="Konstantinidis K."/>
            <person name="Rodrigues J."/>
            <person name="Tiedje J."/>
            <person name="Richardson P."/>
        </authorList>
    </citation>
    <scope>NUCLEOTIDE SEQUENCE [LARGE SCALE GENOMIC DNA]</scope>
    <source>
        <strain>OS155 / ATCC BAA-1091</strain>
    </source>
</reference>
<name>FTHS_SHEB5</name>
<sequence>MLTDMDISSRASLKNITEIGADLGLLPEEMMLFGHTKAKVELSVLQRLAGQRKGKLIIVTAVTPTPHGEGKTVTSIGLTQSLNAIGQKACACIRQPSMGPVFGVKGGAAGGGYAQVVPMQEMNLHLTGDIHAVSSAHNLGAAAIAARLFHETRLGKTEFEAQSEQAFLDIDPNEIRWHRVVDHNDRCLRQIHVGLGDNNGPEYESSFDITAASELMAILALSHDLADMRARIGRLVLALNTQGQVITAEDLGVAGAMTAIMADAIKPTLMQTLNGSPCLIHSGPFANIAHGNSSIIADDIALRLADFVVTEGGFGSDMGFEKFCNIKVRQSGQAPAAAVLVTTLKALKANSGLATEVDSNVSNIHVPNISATNINAPDQARLEAGFANLNWHINNVARYGIPVVVAINRFATDSDAELQWLIEAVNASAAFGCEISDAFIQGEAGAIALAQTVVRAAETESQFKLLYPDEASLEAKLSTLAEVGYGATGVSLSIEAKQQAQQLTALGYGHLPLCMAKTPLSISHDPSLKGVPKDFVVPVRELVLHAGAGFITALVGNVMTMPGLGLKPGYLKIDIDAKGEIVGLG</sequence>
<dbReference type="EC" id="6.3.4.3" evidence="1"/>
<dbReference type="EMBL" id="CP000563">
    <property type="protein sequence ID" value="ABN60049.1"/>
    <property type="molecule type" value="Genomic_DNA"/>
</dbReference>
<dbReference type="RefSeq" id="WP_011845703.1">
    <property type="nucleotide sequence ID" value="NC_009052.1"/>
</dbReference>
<dbReference type="SMR" id="A3CZY6"/>
<dbReference type="STRING" id="325240.Sbal_0520"/>
<dbReference type="KEGG" id="sbl:Sbal_0520"/>
<dbReference type="HOGENOM" id="CLU_003601_3_3_6"/>
<dbReference type="OrthoDB" id="9761733at2"/>
<dbReference type="UniPathway" id="UPA00193"/>
<dbReference type="Proteomes" id="UP000001557">
    <property type="component" value="Chromosome"/>
</dbReference>
<dbReference type="GO" id="GO:0005524">
    <property type="term" value="F:ATP binding"/>
    <property type="evidence" value="ECO:0007669"/>
    <property type="project" value="UniProtKB-UniRule"/>
</dbReference>
<dbReference type="GO" id="GO:0004329">
    <property type="term" value="F:formate-tetrahydrofolate ligase activity"/>
    <property type="evidence" value="ECO:0007669"/>
    <property type="project" value="UniProtKB-UniRule"/>
</dbReference>
<dbReference type="GO" id="GO:0035999">
    <property type="term" value="P:tetrahydrofolate interconversion"/>
    <property type="evidence" value="ECO:0007669"/>
    <property type="project" value="UniProtKB-UniRule"/>
</dbReference>
<dbReference type="CDD" id="cd00477">
    <property type="entry name" value="FTHFS"/>
    <property type="match status" value="1"/>
</dbReference>
<dbReference type="FunFam" id="3.10.410.10:FF:000001">
    <property type="entry name" value="Putative formate--tetrahydrofolate ligase"/>
    <property type="match status" value="1"/>
</dbReference>
<dbReference type="Gene3D" id="3.30.1510.10">
    <property type="entry name" value="Domain 2, N(10)-formyltetrahydrofolate synthetase"/>
    <property type="match status" value="1"/>
</dbReference>
<dbReference type="Gene3D" id="3.10.410.10">
    <property type="entry name" value="Formyltetrahydrofolate synthetase, domain 3"/>
    <property type="match status" value="1"/>
</dbReference>
<dbReference type="Gene3D" id="3.40.50.300">
    <property type="entry name" value="P-loop containing nucleotide triphosphate hydrolases"/>
    <property type="match status" value="1"/>
</dbReference>
<dbReference type="HAMAP" id="MF_01543">
    <property type="entry name" value="FTHFS"/>
    <property type="match status" value="1"/>
</dbReference>
<dbReference type="InterPro" id="IPR000559">
    <property type="entry name" value="Formate_THF_ligase"/>
</dbReference>
<dbReference type="InterPro" id="IPR020628">
    <property type="entry name" value="Formate_THF_ligase_CS"/>
</dbReference>
<dbReference type="InterPro" id="IPR027417">
    <property type="entry name" value="P-loop_NTPase"/>
</dbReference>
<dbReference type="NCBIfam" id="NF010030">
    <property type="entry name" value="PRK13505.1"/>
    <property type="match status" value="1"/>
</dbReference>
<dbReference type="NCBIfam" id="NF010031">
    <property type="entry name" value="PRK13506.1"/>
    <property type="match status" value="1"/>
</dbReference>
<dbReference type="Pfam" id="PF01268">
    <property type="entry name" value="FTHFS"/>
    <property type="match status" value="1"/>
</dbReference>
<dbReference type="SUPFAM" id="SSF52540">
    <property type="entry name" value="P-loop containing nucleoside triphosphate hydrolases"/>
    <property type="match status" value="1"/>
</dbReference>
<dbReference type="PROSITE" id="PS00721">
    <property type="entry name" value="FTHFS_1"/>
    <property type="match status" value="1"/>
</dbReference>
<protein>
    <recommendedName>
        <fullName evidence="1">Formate--tetrahydrofolate ligase</fullName>
        <ecNumber evidence="1">6.3.4.3</ecNumber>
    </recommendedName>
    <alternativeName>
        <fullName evidence="1">Formyltetrahydrofolate synthetase</fullName>
        <shortName evidence="1">FHS</shortName>
        <shortName evidence="1">FTHFS</shortName>
    </alternativeName>
</protein>
<feature type="chain" id="PRO_1000068793" description="Formate--tetrahydrofolate ligase">
    <location>
        <begin position="1"/>
        <end position="585"/>
    </location>
</feature>
<feature type="binding site" evidence="1">
    <location>
        <begin position="65"/>
        <end position="72"/>
    </location>
    <ligand>
        <name>ATP</name>
        <dbReference type="ChEBI" id="CHEBI:30616"/>
    </ligand>
</feature>
<comment type="catalytic activity">
    <reaction evidence="1">
        <text>(6S)-5,6,7,8-tetrahydrofolate + formate + ATP = (6R)-10-formyltetrahydrofolate + ADP + phosphate</text>
        <dbReference type="Rhea" id="RHEA:20221"/>
        <dbReference type="ChEBI" id="CHEBI:15740"/>
        <dbReference type="ChEBI" id="CHEBI:30616"/>
        <dbReference type="ChEBI" id="CHEBI:43474"/>
        <dbReference type="ChEBI" id="CHEBI:57453"/>
        <dbReference type="ChEBI" id="CHEBI:195366"/>
        <dbReference type="ChEBI" id="CHEBI:456216"/>
        <dbReference type="EC" id="6.3.4.3"/>
    </reaction>
</comment>
<comment type="pathway">
    <text evidence="1">One-carbon metabolism; tetrahydrofolate interconversion.</text>
</comment>
<comment type="similarity">
    <text evidence="1">Belongs to the formate--tetrahydrofolate ligase family.</text>
</comment>
<evidence type="ECO:0000255" key="1">
    <source>
        <dbReference type="HAMAP-Rule" id="MF_01543"/>
    </source>
</evidence>
<organism>
    <name type="scientific">Shewanella baltica (strain OS155 / ATCC BAA-1091)</name>
    <dbReference type="NCBI Taxonomy" id="325240"/>
    <lineage>
        <taxon>Bacteria</taxon>
        <taxon>Pseudomonadati</taxon>
        <taxon>Pseudomonadota</taxon>
        <taxon>Gammaproteobacteria</taxon>
        <taxon>Alteromonadales</taxon>
        <taxon>Shewanellaceae</taxon>
        <taxon>Shewanella</taxon>
    </lineage>
</organism>
<keyword id="KW-0067">ATP-binding</keyword>
<keyword id="KW-0436">Ligase</keyword>
<keyword id="KW-0547">Nucleotide-binding</keyword>
<keyword id="KW-0554">One-carbon metabolism</keyword>
<keyword id="KW-1185">Reference proteome</keyword>
<gene>
    <name evidence="1" type="primary">fhs</name>
    <name type="ordered locus">Sbal_0520</name>
</gene>
<accession>A3CZY6</accession>
<proteinExistence type="inferred from homology"/>